<sequence>MSIDKSYCGFIAIVGRPNVGKSTLLNKLLGQKISITSRKAQTTRHRIVGIHTEGAYQAIYVDTPGLHMEEKRAINRLMNKAASSSIGDVELVIFVVEGTRWTPDDEMVLNKLREGKAPVILAVNKVDNVQEKADLLPHLQFLASQMNFLDIVPISAETGLNVDTIAAIVRKHLPEATHHFPEDYITDRSQRFMASEIIREKLMRFLGAELPYSVTVEIERFVSNERGGYDINGLILVEREGQKKMVIGNKGAKIKTIGIEARKDMQEMFEAPVHLELWVKVKSGWADDERALRSLGYVDDL</sequence>
<keyword id="KW-0997">Cell inner membrane</keyword>
<keyword id="KW-1003">Cell membrane</keyword>
<keyword id="KW-0963">Cytoplasm</keyword>
<keyword id="KW-0342">GTP-binding</keyword>
<keyword id="KW-0472">Membrane</keyword>
<keyword id="KW-0547">Nucleotide-binding</keyword>
<keyword id="KW-0690">Ribosome biogenesis</keyword>
<keyword id="KW-0694">RNA-binding</keyword>
<keyword id="KW-0699">rRNA-binding</keyword>
<feature type="chain" id="PRO_1000205539" description="GTPase Era">
    <location>
        <begin position="1"/>
        <end position="301"/>
    </location>
</feature>
<feature type="domain" description="Era-type G" evidence="2">
    <location>
        <begin position="7"/>
        <end position="175"/>
    </location>
</feature>
<feature type="domain" description="KH type-2" evidence="1">
    <location>
        <begin position="206"/>
        <end position="283"/>
    </location>
</feature>
<feature type="region of interest" description="G1" evidence="2">
    <location>
        <begin position="15"/>
        <end position="22"/>
    </location>
</feature>
<feature type="region of interest" description="G2" evidence="2">
    <location>
        <begin position="41"/>
        <end position="45"/>
    </location>
</feature>
<feature type="region of interest" description="G3" evidence="2">
    <location>
        <begin position="62"/>
        <end position="65"/>
    </location>
</feature>
<feature type="region of interest" description="G4" evidence="2">
    <location>
        <begin position="124"/>
        <end position="127"/>
    </location>
</feature>
<feature type="region of interest" description="G5" evidence="2">
    <location>
        <begin position="154"/>
        <end position="156"/>
    </location>
</feature>
<feature type="binding site" evidence="1">
    <location>
        <begin position="15"/>
        <end position="22"/>
    </location>
    <ligand>
        <name>GTP</name>
        <dbReference type="ChEBI" id="CHEBI:37565"/>
    </ligand>
</feature>
<feature type="binding site" evidence="1">
    <location>
        <begin position="62"/>
        <end position="66"/>
    </location>
    <ligand>
        <name>GTP</name>
        <dbReference type="ChEBI" id="CHEBI:37565"/>
    </ligand>
</feature>
<feature type="binding site" evidence="1">
    <location>
        <begin position="124"/>
        <end position="127"/>
    </location>
    <ligand>
        <name>GTP</name>
        <dbReference type="ChEBI" id="CHEBI:37565"/>
    </ligand>
</feature>
<evidence type="ECO:0000255" key="1">
    <source>
        <dbReference type="HAMAP-Rule" id="MF_00367"/>
    </source>
</evidence>
<evidence type="ECO:0000255" key="2">
    <source>
        <dbReference type="PROSITE-ProRule" id="PRU01050"/>
    </source>
</evidence>
<organism>
    <name type="scientific">Escherichia coli (strain K12 / MC4100 / BW2952)</name>
    <dbReference type="NCBI Taxonomy" id="595496"/>
    <lineage>
        <taxon>Bacteria</taxon>
        <taxon>Pseudomonadati</taxon>
        <taxon>Pseudomonadota</taxon>
        <taxon>Gammaproteobacteria</taxon>
        <taxon>Enterobacterales</taxon>
        <taxon>Enterobacteriaceae</taxon>
        <taxon>Escherichia</taxon>
    </lineage>
</organism>
<proteinExistence type="inferred from homology"/>
<name>ERA_ECOBW</name>
<comment type="function">
    <text evidence="1">An essential GTPase that binds both GDP and GTP, with rapid nucleotide exchange. Plays a role in 16S rRNA processing and 30S ribosomal subunit biogenesis and possibly also in cell cycle regulation and energy metabolism.</text>
</comment>
<comment type="subunit">
    <text evidence="1">Monomer.</text>
</comment>
<comment type="subcellular location">
    <subcellularLocation>
        <location>Cytoplasm</location>
    </subcellularLocation>
    <subcellularLocation>
        <location evidence="1">Cell inner membrane</location>
        <topology evidence="1">Peripheral membrane protein</topology>
    </subcellularLocation>
</comment>
<comment type="similarity">
    <text evidence="1 2">Belongs to the TRAFAC class TrmE-Era-EngA-EngB-Septin-like GTPase superfamily. Era GTPase family.</text>
</comment>
<reference key="1">
    <citation type="journal article" date="2009" name="J. Bacteriol.">
        <title>Genomic sequencing reveals regulatory mutations and recombinational events in the widely used MC4100 lineage of Escherichia coli K-12.</title>
        <authorList>
            <person name="Ferenci T."/>
            <person name="Zhou Z."/>
            <person name="Betteridge T."/>
            <person name="Ren Y."/>
            <person name="Liu Y."/>
            <person name="Feng L."/>
            <person name="Reeves P.R."/>
            <person name="Wang L."/>
        </authorList>
    </citation>
    <scope>NUCLEOTIDE SEQUENCE [LARGE SCALE GENOMIC DNA]</scope>
    <source>
        <strain>K12 / MC4100 / BW2952</strain>
    </source>
</reference>
<protein>
    <recommendedName>
        <fullName evidence="1">GTPase Era</fullName>
    </recommendedName>
</protein>
<dbReference type="EMBL" id="CP001396">
    <property type="protein sequence ID" value="ACR63747.1"/>
    <property type="molecule type" value="Genomic_DNA"/>
</dbReference>
<dbReference type="RefSeq" id="WP_000020749.1">
    <property type="nucleotide sequence ID" value="NC_012759.1"/>
</dbReference>
<dbReference type="SMR" id="C4ZYI9"/>
<dbReference type="GeneID" id="75172680"/>
<dbReference type="KEGG" id="ebw:BWG_2330"/>
<dbReference type="HOGENOM" id="CLU_038009_1_2_6"/>
<dbReference type="GO" id="GO:0005829">
    <property type="term" value="C:cytosol"/>
    <property type="evidence" value="ECO:0007669"/>
    <property type="project" value="TreeGrafter"/>
</dbReference>
<dbReference type="GO" id="GO:0005886">
    <property type="term" value="C:plasma membrane"/>
    <property type="evidence" value="ECO:0007669"/>
    <property type="project" value="UniProtKB-SubCell"/>
</dbReference>
<dbReference type="GO" id="GO:0005525">
    <property type="term" value="F:GTP binding"/>
    <property type="evidence" value="ECO:0007669"/>
    <property type="project" value="UniProtKB-UniRule"/>
</dbReference>
<dbReference type="GO" id="GO:0003924">
    <property type="term" value="F:GTPase activity"/>
    <property type="evidence" value="ECO:0007669"/>
    <property type="project" value="UniProtKB-UniRule"/>
</dbReference>
<dbReference type="GO" id="GO:0043024">
    <property type="term" value="F:ribosomal small subunit binding"/>
    <property type="evidence" value="ECO:0007669"/>
    <property type="project" value="TreeGrafter"/>
</dbReference>
<dbReference type="GO" id="GO:0070181">
    <property type="term" value="F:small ribosomal subunit rRNA binding"/>
    <property type="evidence" value="ECO:0007669"/>
    <property type="project" value="UniProtKB-UniRule"/>
</dbReference>
<dbReference type="GO" id="GO:0000028">
    <property type="term" value="P:ribosomal small subunit assembly"/>
    <property type="evidence" value="ECO:0007669"/>
    <property type="project" value="TreeGrafter"/>
</dbReference>
<dbReference type="CDD" id="cd04163">
    <property type="entry name" value="Era"/>
    <property type="match status" value="1"/>
</dbReference>
<dbReference type="CDD" id="cd22534">
    <property type="entry name" value="KH-II_Era"/>
    <property type="match status" value="1"/>
</dbReference>
<dbReference type="FunFam" id="3.30.300.20:FF:000003">
    <property type="entry name" value="GTPase Era"/>
    <property type="match status" value="1"/>
</dbReference>
<dbReference type="FunFam" id="3.40.50.300:FF:000094">
    <property type="entry name" value="GTPase Era"/>
    <property type="match status" value="1"/>
</dbReference>
<dbReference type="Gene3D" id="3.30.300.20">
    <property type="match status" value="1"/>
</dbReference>
<dbReference type="Gene3D" id="3.40.50.300">
    <property type="entry name" value="P-loop containing nucleotide triphosphate hydrolases"/>
    <property type="match status" value="1"/>
</dbReference>
<dbReference type="HAMAP" id="MF_00367">
    <property type="entry name" value="GTPase_Era"/>
    <property type="match status" value="1"/>
</dbReference>
<dbReference type="InterPro" id="IPR030388">
    <property type="entry name" value="G_ERA_dom"/>
</dbReference>
<dbReference type="InterPro" id="IPR006073">
    <property type="entry name" value="GTP-bd"/>
</dbReference>
<dbReference type="InterPro" id="IPR005662">
    <property type="entry name" value="GTPase_Era-like"/>
</dbReference>
<dbReference type="InterPro" id="IPR015946">
    <property type="entry name" value="KH_dom-like_a/b"/>
</dbReference>
<dbReference type="InterPro" id="IPR004044">
    <property type="entry name" value="KH_dom_type_2"/>
</dbReference>
<dbReference type="InterPro" id="IPR009019">
    <property type="entry name" value="KH_sf_prok-type"/>
</dbReference>
<dbReference type="InterPro" id="IPR027417">
    <property type="entry name" value="P-loop_NTPase"/>
</dbReference>
<dbReference type="InterPro" id="IPR005225">
    <property type="entry name" value="Small_GTP-bd"/>
</dbReference>
<dbReference type="NCBIfam" id="TIGR00436">
    <property type="entry name" value="era"/>
    <property type="match status" value="1"/>
</dbReference>
<dbReference type="NCBIfam" id="NF000908">
    <property type="entry name" value="PRK00089.1"/>
    <property type="match status" value="1"/>
</dbReference>
<dbReference type="NCBIfam" id="TIGR00231">
    <property type="entry name" value="small_GTP"/>
    <property type="match status" value="1"/>
</dbReference>
<dbReference type="PANTHER" id="PTHR42698">
    <property type="entry name" value="GTPASE ERA"/>
    <property type="match status" value="1"/>
</dbReference>
<dbReference type="PANTHER" id="PTHR42698:SF1">
    <property type="entry name" value="GTPASE ERA, MITOCHONDRIAL"/>
    <property type="match status" value="1"/>
</dbReference>
<dbReference type="Pfam" id="PF07650">
    <property type="entry name" value="KH_2"/>
    <property type="match status" value="1"/>
</dbReference>
<dbReference type="Pfam" id="PF01926">
    <property type="entry name" value="MMR_HSR1"/>
    <property type="match status" value="1"/>
</dbReference>
<dbReference type="SUPFAM" id="SSF52540">
    <property type="entry name" value="P-loop containing nucleoside triphosphate hydrolases"/>
    <property type="match status" value="1"/>
</dbReference>
<dbReference type="SUPFAM" id="SSF54814">
    <property type="entry name" value="Prokaryotic type KH domain (KH-domain type II)"/>
    <property type="match status" value="1"/>
</dbReference>
<dbReference type="PROSITE" id="PS51713">
    <property type="entry name" value="G_ERA"/>
    <property type="match status" value="1"/>
</dbReference>
<dbReference type="PROSITE" id="PS50823">
    <property type="entry name" value="KH_TYPE_2"/>
    <property type="match status" value="1"/>
</dbReference>
<gene>
    <name evidence="1" type="primary">era</name>
    <name type="ordered locus">BWG_2330</name>
</gene>
<accession>C4ZYI9</accession>